<protein>
    <recommendedName>
        <fullName>Gustatory and pheromone receptor 39a, isoform D</fullName>
    </recommendedName>
</protein>
<evidence type="ECO:0000250" key="1"/>
<evidence type="ECO:0000255" key="2"/>
<evidence type="ECO:0000269" key="3">
    <source>
    </source>
</evidence>
<evidence type="ECO:0000269" key="4">
    <source>
    </source>
</evidence>
<evidence type="ECO:0000305" key="5"/>
<dbReference type="EMBL" id="AE014134">
    <property type="protein sequence ID" value="AAN11116.1"/>
    <property type="molecule type" value="Genomic_DNA"/>
</dbReference>
<dbReference type="RefSeq" id="NP_724331.1">
    <molecule id="P58958-1"/>
    <property type="nucleotide sequence ID" value="NM_165372.1"/>
</dbReference>
<dbReference type="SMR" id="P58958"/>
<dbReference type="IntAct" id="P58958">
    <property type="interactions" value="4"/>
</dbReference>
<dbReference type="GlyCosmos" id="P58958">
    <property type="glycosylation" value="2 sites, No reported glycans"/>
</dbReference>
<dbReference type="EnsemblMetazoa" id="FBtr0081510">
    <molecule id="P58958-1"/>
    <property type="protein sequence ID" value="FBpp0081038"/>
    <property type="gene ID" value="FBgn0264556"/>
</dbReference>
<dbReference type="GeneID" id="117346"/>
<dbReference type="AGR" id="FB:FBgn0264556"/>
<dbReference type="CTD" id="117346"/>
<dbReference type="FlyBase" id="FBgn0264556">
    <property type="gene designation" value="Gr39a"/>
</dbReference>
<dbReference type="VEuPathDB" id="VectorBase:FBgn0264556"/>
<dbReference type="GeneTree" id="ENSGT00940000166130"/>
<dbReference type="HOGENOM" id="CLU_058693_0_0_1"/>
<dbReference type="OMA" id="YETINIR"/>
<dbReference type="OrthoDB" id="6748730at2759"/>
<dbReference type="BioGRID-ORCS" id="117346">
    <property type="hits" value="0 hits in 1 CRISPR screen"/>
</dbReference>
<dbReference type="GenomeRNAi" id="117346"/>
<dbReference type="Proteomes" id="UP000000803">
    <property type="component" value="Chromosome 2L"/>
</dbReference>
<dbReference type="Bgee" id="FBgn0264556">
    <property type="expression patterns" value="Expressed in adult Malpighian tubule principal cell of lower segment in Malpighian tubule and 39 other cell types or tissues"/>
</dbReference>
<dbReference type="ExpressionAtlas" id="P58958">
    <property type="expression patterns" value="baseline and differential"/>
</dbReference>
<dbReference type="GO" id="GO:0030424">
    <property type="term" value="C:axon"/>
    <property type="evidence" value="ECO:0000318"/>
    <property type="project" value="GO_Central"/>
</dbReference>
<dbReference type="GO" id="GO:0030425">
    <property type="term" value="C:dendrite"/>
    <property type="evidence" value="ECO:0000318"/>
    <property type="project" value="GO_Central"/>
</dbReference>
<dbReference type="GO" id="GO:0016020">
    <property type="term" value="C:membrane"/>
    <property type="evidence" value="ECO:0000303"/>
    <property type="project" value="UniProtKB"/>
</dbReference>
<dbReference type="GO" id="GO:0043025">
    <property type="term" value="C:neuronal cell body"/>
    <property type="evidence" value="ECO:0000318"/>
    <property type="project" value="GO_Central"/>
</dbReference>
<dbReference type="GO" id="GO:0005886">
    <property type="term" value="C:plasma membrane"/>
    <property type="evidence" value="ECO:0007669"/>
    <property type="project" value="UniProtKB-SubCell"/>
</dbReference>
<dbReference type="GO" id="GO:0008527">
    <property type="term" value="F:taste receptor activity"/>
    <property type="evidence" value="ECO:0000303"/>
    <property type="project" value="UniProtKB"/>
</dbReference>
<dbReference type="GO" id="GO:0007635">
    <property type="term" value="P:chemosensory behavior"/>
    <property type="evidence" value="ECO:0000318"/>
    <property type="project" value="GO_Central"/>
</dbReference>
<dbReference type="GO" id="GO:0008049">
    <property type="term" value="P:male courtship behavior"/>
    <property type="evidence" value="ECO:0000315"/>
    <property type="project" value="FlyBase"/>
</dbReference>
<dbReference type="GO" id="GO:0050909">
    <property type="term" value="P:sensory perception of taste"/>
    <property type="evidence" value="ECO:0000303"/>
    <property type="project" value="UniProtKB"/>
</dbReference>
<dbReference type="GO" id="GO:0007165">
    <property type="term" value="P:signal transduction"/>
    <property type="evidence" value="ECO:0007669"/>
    <property type="project" value="UniProtKB-KW"/>
</dbReference>
<dbReference type="InterPro" id="IPR013604">
    <property type="entry name" value="7TM_chemorcpt"/>
</dbReference>
<dbReference type="PANTHER" id="PTHR21143:SF133">
    <property type="entry name" value="GUSTATORY AND PHEROMONE RECEPTOR 32A-RELATED"/>
    <property type="match status" value="1"/>
</dbReference>
<dbReference type="PANTHER" id="PTHR21143">
    <property type="entry name" value="INVERTEBRATE GUSTATORY RECEPTOR"/>
    <property type="match status" value="1"/>
</dbReference>
<dbReference type="Pfam" id="PF08395">
    <property type="entry name" value="7tm_7"/>
    <property type="match status" value="1"/>
</dbReference>
<reference key="1">
    <citation type="journal article" date="2000" name="Science">
        <title>The genome sequence of Drosophila melanogaster.</title>
        <authorList>
            <person name="Adams M.D."/>
            <person name="Celniker S.E."/>
            <person name="Holt R.A."/>
            <person name="Evans C.A."/>
            <person name="Gocayne J.D."/>
            <person name="Amanatides P.G."/>
            <person name="Scherer S.E."/>
            <person name="Li P.W."/>
            <person name="Hoskins R.A."/>
            <person name="Galle R.F."/>
            <person name="George R.A."/>
            <person name="Lewis S.E."/>
            <person name="Richards S."/>
            <person name="Ashburner M."/>
            <person name="Henderson S.N."/>
            <person name="Sutton G.G."/>
            <person name="Wortman J.R."/>
            <person name="Yandell M.D."/>
            <person name="Zhang Q."/>
            <person name="Chen L.X."/>
            <person name="Brandon R.C."/>
            <person name="Rogers Y.-H.C."/>
            <person name="Blazej R.G."/>
            <person name="Champe M."/>
            <person name="Pfeiffer B.D."/>
            <person name="Wan K.H."/>
            <person name="Doyle C."/>
            <person name="Baxter E.G."/>
            <person name="Helt G."/>
            <person name="Nelson C.R."/>
            <person name="Miklos G.L.G."/>
            <person name="Abril J.F."/>
            <person name="Agbayani A."/>
            <person name="An H.-J."/>
            <person name="Andrews-Pfannkoch C."/>
            <person name="Baldwin D."/>
            <person name="Ballew R.M."/>
            <person name="Basu A."/>
            <person name="Baxendale J."/>
            <person name="Bayraktaroglu L."/>
            <person name="Beasley E.M."/>
            <person name="Beeson K.Y."/>
            <person name="Benos P.V."/>
            <person name="Berman B.P."/>
            <person name="Bhandari D."/>
            <person name="Bolshakov S."/>
            <person name="Borkova D."/>
            <person name="Botchan M.R."/>
            <person name="Bouck J."/>
            <person name="Brokstein P."/>
            <person name="Brottier P."/>
            <person name="Burtis K.C."/>
            <person name="Busam D.A."/>
            <person name="Butler H."/>
            <person name="Cadieu E."/>
            <person name="Center A."/>
            <person name="Chandra I."/>
            <person name="Cherry J.M."/>
            <person name="Cawley S."/>
            <person name="Dahlke C."/>
            <person name="Davenport L.B."/>
            <person name="Davies P."/>
            <person name="de Pablos B."/>
            <person name="Delcher A."/>
            <person name="Deng Z."/>
            <person name="Mays A.D."/>
            <person name="Dew I."/>
            <person name="Dietz S.M."/>
            <person name="Dodson K."/>
            <person name="Doup L.E."/>
            <person name="Downes M."/>
            <person name="Dugan-Rocha S."/>
            <person name="Dunkov B.C."/>
            <person name="Dunn P."/>
            <person name="Durbin K.J."/>
            <person name="Evangelista C.C."/>
            <person name="Ferraz C."/>
            <person name="Ferriera S."/>
            <person name="Fleischmann W."/>
            <person name="Fosler C."/>
            <person name="Gabrielian A.E."/>
            <person name="Garg N.S."/>
            <person name="Gelbart W.M."/>
            <person name="Glasser K."/>
            <person name="Glodek A."/>
            <person name="Gong F."/>
            <person name="Gorrell J.H."/>
            <person name="Gu Z."/>
            <person name="Guan P."/>
            <person name="Harris M."/>
            <person name="Harris N.L."/>
            <person name="Harvey D.A."/>
            <person name="Heiman T.J."/>
            <person name="Hernandez J.R."/>
            <person name="Houck J."/>
            <person name="Hostin D."/>
            <person name="Houston K.A."/>
            <person name="Howland T.J."/>
            <person name="Wei M.-H."/>
            <person name="Ibegwam C."/>
            <person name="Jalali M."/>
            <person name="Kalush F."/>
            <person name="Karpen G.H."/>
            <person name="Ke Z."/>
            <person name="Kennison J.A."/>
            <person name="Ketchum K.A."/>
            <person name="Kimmel B.E."/>
            <person name="Kodira C.D."/>
            <person name="Kraft C.L."/>
            <person name="Kravitz S."/>
            <person name="Kulp D."/>
            <person name="Lai Z."/>
            <person name="Lasko P."/>
            <person name="Lei Y."/>
            <person name="Levitsky A.A."/>
            <person name="Li J.H."/>
            <person name="Li Z."/>
            <person name="Liang Y."/>
            <person name="Lin X."/>
            <person name="Liu X."/>
            <person name="Mattei B."/>
            <person name="McIntosh T.C."/>
            <person name="McLeod M.P."/>
            <person name="McPherson D."/>
            <person name="Merkulov G."/>
            <person name="Milshina N.V."/>
            <person name="Mobarry C."/>
            <person name="Morris J."/>
            <person name="Moshrefi A."/>
            <person name="Mount S.M."/>
            <person name="Moy M."/>
            <person name="Murphy B."/>
            <person name="Murphy L."/>
            <person name="Muzny D.M."/>
            <person name="Nelson D.L."/>
            <person name="Nelson D.R."/>
            <person name="Nelson K.A."/>
            <person name="Nixon K."/>
            <person name="Nusskern D.R."/>
            <person name="Pacleb J.M."/>
            <person name="Palazzolo M."/>
            <person name="Pittman G.S."/>
            <person name="Pan S."/>
            <person name="Pollard J."/>
            <person name="Puri V."/>
            <person name="Reese M.G."/>
            <person name="Reinert K."/>
            <person name="Remington K."/>
            <person name="Saunders R.D.C."/>
            <person name="Scheeler F."/>
            <person name="Shen H."/>
            <person name="Shue B.C."/>
            <person name="Siden-Kiamos I."/>
            <person name="Simpson M."/>
            <person name="Skupski M.P."/>
            <person name="Smith T.J."/>
            <person name="Spier E."/>
            <person name="Spradling A.C."/>
            <person name="Stapleton M."/>
            <person name="Strong R."/>
            <person name="Sun E."/>
            <person name="Svirskas R."/>
            <person name="Tector C."/>
            <person name="Turner R."/>
            <person name="Venter E."/>
            <person name="Wang A.H."/>
            <person name="Wang X."/>
            <person name="Wang Z.-Y."/>
            <person name="Wassarman D.A."/>
            <person name="Weinstock G.M."/>
            <person name="Weissenbach J."/>
            <person name="Williams S.M."/>
            <person name="Woodage T."/>
            <person name="Worley K.C."/>
            <person name="Wu D."/>
            <person name="Yang S."/>
            <person name="Yao Q.A."/>
            <person name="Ye J."/>
            <person name="Yeh R.-F."/>
            <person name="Zaveri J.S."/>
            <person name="Zhan M."/>
            <person name="Zhang G."/>
            <person name="Zhao Q."/>
            <person name="Zheng L."/>
            <person name="Zheng X.H."/>
            <person name="Zhong F.N."/>
            <person name="Zhong W."/>
            <person name="Zhou X."/>
            <person name="Zhu S.C."/>
            <person name="Zhu X."/>
            <person name="Smith H.O."/>
            <person name="Gibbs R.A."/>
            <person name="Myers E.W."/>
            <person name="Rubin G.M."/>
            <person name="Venter J.C."/>
        </authorList>
    </citation>
    <scope>NUCLEOTIDE SEQUENCE [LARGE SCALE GENOMIC DNA]</scope>
    <source>
        <strain>Berkeley</strain>
    </source>
</reference>
<reference key="2">
    <citation type="journal article" date="2002" name="Genome Biol.">
        <title>Annotation of the Drosophila melanogaster euchromatic genome: a systematic review.</title>
        <authorList>
            <person name="Misra S."/>
            <person name="Crosby M.A."/>
            <person name="Mungall C.J."/>
            <person name="Matthews B.B."/>
            <person name="Campbell K.S."/>
            <person name="Hradecky P."/>
            <person name="Huang Y."/>
            <person name="Kaminker J.S."/>
            <person name="Millburn G.H."/>
            <person name="Prochnik S.E."/>
            <person name="Smith C.D."/>
            <person name="Tupy J.L."/>
            <person name="Whitfield E.J."/>
            <person name="Bayraktaroglu L."/>
            <person name="Berman B.P."/>
            <person name="Bettencourt B.R."/>
            <person name="Celniker S.E."/>
            <person name="de Grey A.D.N.J."/>
            <person name="Drysdale R.A."/>
            <person name="Harris N.L."/>
            <person name="Richter J."/>
            <person name="Russo S."/>
            <person name="Schroeder A.J."/>
            <person name="Shu S.Q."/>
            <person name="Stapleton M."/>
            <person name="Yamada C."/>
            <person name="Ashburner M."/>
            <person name="Gelbart W.M."/>
            <person name="Rubin G.M."/>
            <person name="Lewis S.E."/>
        </authorList>
    </citation>
    <scope>GENOME REANNOTATION</scope>
    <source>
        <strain>Berkeley</strain>
    </source>
</reference>
<reference key="3">
    <citation type="journal article" date="2000" name="Science">
        <title>Candidate taste receptors in Drosophila.</title>
        <authorList>
            <person name="Clyne P.J."/>
            <person name="Warr C.G."/>
            <person name="Carlson J.R."/>
        </authorList>
    </citation>
    <scope>IDENTIFICATION</scope>
    <scope>TISSUE SPECIFICITY</scope>
</reference>
<reference key="4">
    <citation type="journal article" date="2001" name="Curr. Biol.">
        <title>Spatially restricted expression of candidate taste receptors in the Drosophila gustatory system.</title>
        <authorList>
            <person name="Dunipace L."/>
            <person name="Meister S."/>
            <person name="McNealy C."/>
            <person name="Amrein H."/>
        </authorList>
    </citation>
    <scope>IDENTIFICATION</scope>
</reference>
<reference key="5">
    <citation type="journal article" date="2011" name="Behav. Genet.">
        <title>Gr39a, a highly diversified gustatory receptor in Drosophila, has a role in sexual behavior.</title>
        <authorList>
            <person name="Watanabe K."/>
            <person name="Toba G."/>
            <person name="Koganezawa M."/>
            <person name="Yamamoto D."/>
        </authorList>
    </citation>
    <scope>FUNCTION</scope>
    <scope>DISRUPTION PHENOTYPE</scope>
</reference>
<organism>
    <name type="scientific">Drosophila melanogaster</name>
    <name type="common">Fruit fly</name>
    <dbReference type="NCBI Taxonomy" id="7227"/>
    <lineage>
        <taxon>Eukaryota</taxon>
        <taxon>Metazoa</taxon>
        <taxon>Ecdysozoa</taxon>
        <taxon>Arthropoda</taxon>
        <taxon>Hexapoda</taxon>
        <taxon>Insecta</taxon>
        <taxon>Pterygota</taxon>
        <taxon>Neoptera</taxon>
        <taxon>Endopterygota</taxon>
        <taxon>Diptera</taxon>
        <taxon>Brachycera</taxon>
        <taxon>Muscomorpha</taxon>
        <taxon>Ephydroidea</taxon>
        <taxon>Drosophilidae</taxon>
        <taxon>Drosophila</taxon>
        <taxon>Sophophora</taxon>
    </lineage>
</organism>
<comment type="function">
    <text evidence="4">Gustatory receptor which mediates acceptance or avoidance behavior, depending on its substrates. Plays a role in sustaining courtship behavior in males, possibly through the reception of a stimulating arrestant pheromone.</text>
</comment>
<comment type="subcellular location">
    <subcellularLocation>
        <location evidence="1">Cell membrane</location>
        <topology evidence="1">Multi-pass membrane protein</topology>
    </subcellularLocation>
</comment>
<comment type="alternative products">
    <event type="alternative splicing"/>
    <isoform>
        <id>P58958-1</id>
        <name>D</name>
        <sequence type="displayed"/>
    </isoform>
    <isoform>
        <id>P58956-1</id>
        <name>B</name>
        <sequence type="external"/>
    </isoform>
    <isoform>
        <id>P58957-1</id>
        <name>C</name>
        <sequence type="external"/>
    </isoform>
    <isoform>
        <id>P58959-1</id>
        <name>A</name>
        <sequence type="external"/>
    </isoform>
</comment>
<comment type="tissue specificity">
    <text evidence="3">Expressed in the adult labellar chemosensory neurons and adult thorax and abdomen.</text>
</comment>
<comment type="disruption phenotype">
    <text evidence="4">Leads to reduced courtship levels toward females.</text>
</comment>
<comment type="similarity">
    <text evidence="5">Belongs to the insect chemoreceptor superfamily. Gustatory receptor (GR) family. Gr21a subfamily.</text>
</comment>
<feature type="chain" id="PRO_0000216511" description="Gustatory and pheromone receptor 39a, isoform D">
    <location>
        <begin position="1"/>
        <end position="381"/>
    </location>
</feature>
<feature type="topological domain" description="Cytoplasmic" evidence="1">
    <location>
        <begin position="1"/>
        <end position="43"/>
    </location>
</feature>
<feature type="transmembrane region" description="Helical; Name=1" evidence="2">
    <location>
        <begin position="44"/>
        <end position="64"/>
    </location>
</feature>
<feature type="topological domain" description="Extracellular" evidence="1">
    <location>
        <begin position="65"/>
        <end position="78"/>
    </location>
</feature>
<feature type="transmembrane region" description="Helical; Name=2" evidence="2">
    <location>
        <begin position="79"/>
        <end position="101"/>
    </location>
</feature>
<feature type="topological domain" description="Cytoplasmic" evidence="1">
    <location>
        <begin position="102"/>
        <end position="128"/>
    </location>
</feature>
<feature type="transmembrane region" description="Helical; Name=3" evidence="2">
    <location>
        <begin position="129"/>
        <end position="149"/>
    </location>
</feature>
<feature type="topological domain" description="Extracellular" evidence="1">
    <location>
        <begin position="150"/>
        <end position="172"/>
    </location>
</feature>
<feature type="transmembrane region" description="Helical; Name=4" evidence="2">
    <location>
        <begin position="173"/>
        <end position="193"/>
    </location>
</feature>
<feature type="topological domain" description="Cytoplasmic" evidence="1">
    <location>
        <begin position="194"/>
        <end position="234"/>
    </location>
</feature>
<feature type="transmembrane region" description="Helical; Name=5" evidence="2">
    <location>
        <begin position="235"/>
        <end position="255"/>
    </location>
</feature>
<feature type="topological domain" description="Extracellular" evidence="1">
    <location>
        <begin position="256"/>
        <end position="273"/>
    </location>
</feature>
<feature type="transmembrane region" description="Helical; Name=6" evidence="2">
    <location>
        <begin position="274"/>
        <end position="294"/>
    </location>
</feature>
<feature type="topological domain" description="Cytoplasmic" evidence="1">
    <location>
        <begin position="295"/>
        <end position="350"/>
    </location>
</feature>
<feature type="transmembrane region" description="Helical; Name=7" evidence="2">
    <location>
        <begin position="351"/>
        <end position="371"/>
    </location>
</feature>
<feature type="topological domain" description="Extracellular" evidence="1">
    <location>
        <begin position="372"/>
        <end position="381"/>
    </location>
</feature>
<feature type="glycosylation site" description="N-linked (GlcNAc...) asparagine" evidence="2">
    <location>
        <position position="74"/>
    </location>
</feature>
<feature type="glycosylation site" description="N-linked (GlcNAc...) asparagine" evidence="2">
    <location>
        <position position="373"/>
    </location>
</feature>
<accession>P58958</accession>
<keyword id="KW-0025">Alternative splicing</keyword>
<keyword id="KW-1003">Cell membrane</keyword>
<keyword id="KW-0325">Glycoprotein</keyword>
<keyword id="KW-0472">Membrane</keyword>
<keyword id="KW-0675">Receptor</keyword>
<keyword id="KW-1185">Reference proteome</keyword>
<keyword id="KW-0807">Transducer</keyword>
<keyword id="KW-0812">Transmembrane</keyword>
<keyword id="KW-1133">Transmembrane helix</keyword>
<sequence length="381" mass="44591">MKRNAFEELRVQLRTLKWLGVLRFTIDFNKCLVRENASEERSAWLYLIGVVGITCSLIVYSTYFPSHFIMGKHNTTGNCYALINIRSCSIVTMLIYTQLYIQRFRFVALLQSILRFNQISGSHREEGRFAFYYYTHLSLLIICMLNYAYGYWTAGVRLTTIPIYLLQYGFSYLFLGQVVVLFACIQQILLSILKYYNQVVLKNIKSSKESREFYYNFCKYNQVIWLSYTEINHCFGLLLLLVTGLILLITPSGPFYLVSTIFEGRFRQNWQFSLMSFTAILWSLPWIVLLVLAMGRNDVQKEANKTAKMLTKVPRTGTGLDRMIEKFLLKNLRQKPILTAYGFFALDKSTLFKLFTAIFTYMVILVQFKEMENSTKSINKF</sequence>
<name>G39AC_DROME</name>
<gene>
    <name type="primary">Gr39a</name>
    <name type="synonym">GR39D.2</name>
    <name type="ORF">CG31622</name>
</gene>
<proteinExistence type="evidence at transcript level"/>